<dbReference type="EMBL" id="CP000560">
    <property type="protein sequence ID" value="ABS74006.1"/>
    <property type="molecule type" value="Genomic_DNA"/>
</dbReference>
<dbReference type="RefSeq" id="WP_007409801.1">
    <property type="nucleotide sequence ID" value="NC_009725.2"/>
</dbReference>
<dbReference type="SMR" id="A7Z4T0"/>
<dbReference type="GeneID" id="93080776"/>
<dbReference type="KEGG" id="bay:RBAM_016430"/>
<dbReference type="HOGENOM" id="CLU_070525_2_0_9"/>
<dbReference type="Proteomes" id="UP000001120">
    <property type="component" value="Chromosome"/>
</dbReference>
<dbReference type="GO" id="GO:0005829">
    <property type="term" value="C:cytosol"/>
    <property type="evidence" value="ECO:0007669"/>
    <property type="project" value="TreeGrafter"/>
</dbReference>
<dbReference type="GO" id="GO:0000028">
    <property type="term" value="P:ribosomal small subunit assembly"/>
    <property type="evidence" value="ECO:0007669"/>
    <property type="project" value="TreeGrafter"/>
</dbReference>
<dbReference type="GO" id="GO:0006412">
    <property type="term" value="P:translation"/>
    <property type="evidence" value="ECO:0007669"/>
    <property type="project" value="TreeGrafter"/>
</dbReference>
<dbReference type="CDD" id="cd01734">
    <property type="entry name" value="YlxS_C"/>
    <property type="match status" value="1"/>
</dbReference>
<dbReference type="FunFam" id="3.30.300.70:FF:000001">
    <property type="entry name" value="Ribosome maturation factor RimP"/>
    <property type="match status" value="1"/>
</dbReference>
<dbReference type="Gene3D" id="2.30.30.180">
    <property type="entry name" value="Ribosome maturation factor RimP, C-terminal domain"/>
    <property type="match status" value="1"/>
</dbReference>
<dbReference type="Gene3D" id="3.30.300.70">
    <property type="entry name" value="RimP-like superfamily, N-terminal"/>
    <property type="match status" value="1"/>
</dbReference>
<dbReference type="HAMAP" id="MF_01077">
    <property type="entry name" value="RimP"/>
    <property type="match status" value="1"/>
</dbReference>
<dbReference type="InterPro" id="IPR003728">
    <property type="entry name" value="Ribosome_maturation_RimP"/>
</dbReference>
<dbReference type="InterPro" id="IPR028998">
    <property type="entry name" value="RimP_C"/>
</dbReference>
<dbReference type="InterPro" id="IPR036847">
    <property type="entry name" value="RimP_C_sf"/>
</dbReference>
<dbReference type="InterPro" id="IPR028989">
    <property type="entry name" value="RimP_N"/>
</dbReference>
<dbReference type="InterPro" id="IPR035956">
    <property type="entry name" value="RimP_N_sf"/>
</dbReference>
<dbReference type="NCBIfam" id="NF000928">
    <property type="entry name" value="PRK00092.1-2"/>
    <property type="match status" value="1"/>
</dbReference>
<dbReference type="PANTHER" id="PTHR33867">
    <property type="entry name" value="RIBOSOME MATURATION FACTOR RIMP"/>
    <property type="match status" value="1"/>
</dbReference>
<dbReference type="PANTHER" id="PTHR33867:SF1">
    <property type="entry name" value="RIBOSOME MATURATION FACTOR RIMP"/>
    <property type="match status" value="1"/>
</dbReference>
<dbReference type="Pfam" id="PF17384">
    <property type="entry name" value="DUF150_C"/>
    <property type="match status" value="1"/>
</dbReference>
<dbReference type="Pfam" id="PF02576">
    <property type="entry name" value="RimP_N"/>
    <property type="match status" value="1"/>
</dbReference>
<dbReference type="SUPFAM" id="SSF74942">
    <property type="entry name" value="YhbC-like, C-terminal domain"/>
    <property type="match status" value="1"/>
</dbReference>
<dbReference type="SUPFAM" id="SSF75420">
    <property type="entry name" value="YhbC-like, N-terminal domain"/>
    <property type="match status" value="1"/>
</dbReference>
<organism>
    <name type="scientific">Bacillus velezensis (strain DSM 23117 / BGSC 10A6 / LMG 26770 / FZB42)</name>
    <name type="common">Bacillus amyloliquefaciens subsp. plantarum</name>
    <dbReference type="NCBI Taxonomy" id="326423"/>
    <lineage>
        <taxon>Bacteria</taxon>
        <taxon>Bacillati</taxon>
        <taxon>Bacillota</taxon>
        <taxon>Bacilli</taxon>
        <taxon>Bacillales</taxon>
        <taxon>Bacillaceae</taxon>
        <taxon>Bacillus</taxon>
        <taxon>Bacillus amyloliquefaciens group</taxon>
    </lineage>
</organism>
<keyword id="KW-0963">Cytoplasm</keyword>
<keyword id="KW-0690">Ribosome biogenesis</keyword>
<proteinExistence type="inferred from homology"/>
<accession>A7Z4T0</accession>
<protein>
    <recommendedName>
        <fullName evidence="1">Ribosome maturation factor RimP</fullName>
    </recommendedName>
</protein>
<name>RIMP_BACVZ</name>
<feature type="chain" id="PRO_1000084516" description="Ribosome maturation factor RimP">
    <location>
        <begin position="1"/>
        <end position="156"/>
    </location>
</feature>
<reference key="1">
    <citation type="journal article" date="2007" name="Nat. Biotechnol.">
        <title>Comparative analysis of the complete genome sequence of the plant growth-promoting bacterium Bacillus amyloliquefaciens FZB42.</title>
        <authorList>
            <person name="Chen X.H."/>
            <person name="Koumoutsi A."/>
            <person name="Scholz R."/>
            <person name="Eisenreich A."/>
            <person name="Schneider K."/>
            <person name="Heinemeyer I."/>
            <person name="Morgenstern B."/>
            <person name="Voss B."/>
            <person name="Hess W.R."/>
            <person name="Reva O."/>
            <person name="Junge H."/>
            <person name="Voigt B."/>
            <person name="Jungblut P.R."/>
            <person name="Vater J."/>
            <person name="Suessmuth R."/>
            <person name="Liesegang H."/>
            <person name="Strittmatter A."/>
            <person name="Gottschalk G."/>
            <person name="Borriss R."/>
        </authorList>
    </citation>
    <scope>NUCLEOTIDE SEQUENCE [LARGE SCALE GENOMIC DNA]</scope>
    <source>
        <strain>DSM 23117 / BGSC 10A6 / LMG 26770 / FZB42</strain>
    </source>
</reference>
<sequence>MSKKVTDTVQEMAQPILDDLQLELVDIEFVKEGQNWFLRVFIDSENGVDIEECAKVSEALSEKLDEADPITQNYFLEVSSPGAERPLKKKADFEKSLGKNVYMKTYEPIDGLKVFEGKLAEFDGQTVTIEMTVKTRKKRVNIPYEKIANARLAVTF</sequence>
<evidence type="ECO:0000255" key="1">
    <source>
        <dbReference type="HAMAP-Rule" id="MF_01077"/>
    </source>
</evidence>
<gene>
    <name evidence="1" type="primary">rimP</name>
    <name type="ordered locus">RBAM_016430</name>
</gene>
<comment type="function">
    <text evidence="1">Required for maturation of 30S ribosomal subunits.</text>
</comment>
<comment type="subcellular location">
    <subcellularLocation>
        <location evidence="1">Cytoplasm</location>
    </subcellularLocation>
</comment>
<comment type="similarity">
    <text evidence="1">Belongs to the RimP family.</text>
</comment>